<dbReference type="EMBL" id="AY198133">
    <property type="protein sequence ID" value="AAP58912.1"/>
    <property type="molecule type" value="Genomic_DNA"/>
</dbReference>
<dbReference type="SMR" id="P61694"/>
<dbReference type="GO" id="GO:0005829">
    <property type="term" value="C:cytosol"/>
    <property type="evidence" value="ECO:0007669"/>
    <property type="project" value="TreeGrafter"/>
</dbReference>
<dbReference type="GO" id="GO:0043022">
    <property type="term" value="F:ribosome binding"/>
    <property type="evidence" value="ECO:0007669"/>
    <property type="project" value="UniProtKB-UniRule"/>
</dbReference>
<dbReference type="GO" id="GO:0019843">
    <property type="term" value="F:rRNA binding"/>
    <property type="evidence" value="ECO:0007669"/>
    <property type="project" value="UniProtKB-UniRule"/>
</dbReference>
<dbReference type="GO" id="GO:0003743">
    <property type="term" value="F:translation initiation factor activity"/>
    <property type="evidence" value="ECO:0007669"/>
    <property type="project" value="UniProtKB-UniRule"/>
</dbReference>
<dbReference type="CDD" id="cd04451">
    <property type="entry name" value="S1_IF1"/>
    <property type="match status" value="1"/>
</dbReference>
<dbReference type="FunFam" id="2.40.50.140:FF:000002">
    <property type="entry name" value="Translation initiation factor IF-1"/>
    <property type="match status" value="1"/>
</dbReference>
<dbReference type="Gene3D" id="2.40.50.140">
    <property type="entry name" value="Nucleic acid-binding proteins"/>
    <property type="match status" value="1"/>
</dbReference>
<dbReference type="HAMAP" id="MF_00075">
    <property type="entry name" value="IF_1"/>
    <property type="match status" value="1"/>
</dbReference>
<dbReference type="InterPro" id="IPR012340">
    <property type="entry name" value="NA-bd_OB-fold"/>
</dbReference>
<dbReference type="InterPro" id="IPR006196">
    <property type="entry name" value="RNA-binding_domain_S1_IF1"/>
</dbReference>
<dbReference type="InterPro" id="IPR003029">
    <property type="entry name" value="S1_domain"/>
</dbReference>
<dbReference type="InterPro" id="IPR004368">
    <property type="entry name" value="TIF_IF1"/>
</dbReference>
<dbReference type="NCBIfam" id="TIGR00008">
    <property type="entry name" value="infA"/>
    <property type="match status" value="1"/>
</dbReference>
<dbReference type="PANTHER" id="PTHR33370">
    <property type="entry name" value="TRANSLATION INITIATION FACTOR IF-1, CHLOROPLASTIC"/>
    <property type="match status" value="1"/>
</dbReference>
<dbReference type="PANTHER" id="PTHR33370:SF1">
    <property type="entry name" value="TRANSLATION INITIATION FACTOR IF-1, CHLOROPLASTIC"/>
    <property type="match status" value="1"/>
</dbReference>
<dbReference type="Pfam" id="PF01176">
    <property type="entry name" value="eIF-1a"/>
    <property type="match status" value="1"/>
</dbReference>
<dbReference type="SMART" id="SM00316">
    <property type="entry name" value="S1"/>
    <property type="match status" value="1"/>
</dbReference>
<dbReference type="SUPFAM" id="SSF50249">
    <property type="entry name" value="Nucleic acid-binding proteins"/>
    <property type="match status" value="1"/>
</dbReference>
<dbReference type="PROSITE" id="PS50832">
    <property type="entry name" value="S1_IF1_TYPE"/>
    <property type="match status" value="1"/>
</dbReference>
<gene>
    <name evidence="1" type="primary">infA</name>
</gene>
<feature type="chain" id="PRO_0000095864" description="Translation initiation factor IF-1">
    <location>
        <begin position="1"/>
        <end position="72"/>
    </location>
</feature>
<feature type="domain" description="S1-like" evidence="1">
    <location>
        <begin position="1"/>
        <end position="72"/>
    </location>
</feature>
<sequence>MAKTDLLEVQGTILEVLPNTMFKVQLKNGATILAHVSGKIRMNYIRILPGDTVVVEMSPYDLERGRIVFRHK</sequence>
<reference key="1">
    <citation type="journal article" date="2003" name="Mol. Genet. Genomics">
        <title>Gene content and organization of an 85-kb DNA segment from the genome of the phytopathogenic mollicute Spiroplasma kunkelii.</title>
        <authorList>
            <person name="Zhao Y."/>
            <person name="Hammond R.W."/>
            <person name="Jomantiene R."/>
            <person name="Dally E.L."/>
            <person name="Lee I.-M."/>
            <person name="Jia H."/>
            <person name="Wu H."/>
            <person name="Lin S."/>
            <person name="Zhang P."/>
            <person name="Kenton S."/>
            <person name="Najar F.Z."/>
            <person name="Hua A."/>
            <person name="Roe B.A."/>
            <person name="Fletcher J."/>
            <person name="Davis R.E."/>
        </authorList>
    </citation>
    <scope>NUCLEOTIDE SEQUENCE [GENOMIC DNA]</scope>
    <source>
        <strain>CR2-3x</strain>
    </source>
</reference>
<protein>
    <recommendedName>
        <fullName evidence="1">Translation initiation factor IF-1</fullName>
    </recommendedName>
</protein>
<name>IF1_SPIKU</name>
<accession>P61694</accession>
<keyword id="KW-0963">Cytoplasm</keyword>
<keyword id="KW-0396">Initiation factor</keyword>
<keyword id="KW-0648">Protein biosynthesis</keyword>
<keyword id="KW-0694">RNA-binding</keyword>
<keyword id="KW-0699">rRNA-binding</keyword>
<comment type="function">
    <text evidence="1">One of the essential components for the initiation of protein synthesis. Stabilizes the binding of IF-2 and IF-3 on the 30S subunit to which N-formylmethionyl-tRNA(fMet) subsequently binds. Helps modulate mRNA selection, yielding the 30S pre-initiation complex (PIC). Upon addition of the 50S ribosomal subunit IF-1, IF-2 and IF-3 are released leaving the mature 70S translation initiation complex.</text>
</comment>
<comment type="subunit">
    <text evidence="1">Component of the 30S ribosomal translation pre-initiation complex which assembles on the 30S ribosome in the order IF-2 and IF-3, IF-1 and N-formylmethionyl-tRNA(fMet); mRNA recruitment can occur at any time during PIC assembly.</text>
</comment>
<comment type="subcellular location">
    <subcellularLocation>
        <location evidence="1">Cytoplasm</location>
    </subcellularLocation>
</comment>
<comment type="similarity">
    <text evidence="1">Belongs to the IF-1 family.</text>
</comment>
<evidence type="ECO:0000255" key="1">
    <source>
        <dbReference type="HAMAP-Rule" id="MF_00075"/>
    </source>
</evidence>
<organism>
    <name type="scientific">Spiroplasma kunkelii</name>
    <dbReference type="NCBI Taxonomy" id="47834"/>
    <lineage>
        <taxon>Bacteria</taxon>
        <taxon>Bacillati</taxon>
        <taxon>Mycoplasmatota</taxon>
        <taxon>Mollicutes</taxon>
        <taxon>Entomoplasmatales</taxon>
        <taxon>Spiroplasmataceae</taxon>
        <taxon>Spiroplasma</taxon>
    </lineage>
</organism>
<proteinExistence type="inferred from homology"/>